<gene>
    <name evidence="1" type="primary">NCP1</name>
    <name type="synonym">CPR</name>
</gene>
<protein>
    <recommendedName>
        <fullName evidence="1">NADPH--cytochrome P450 reductase</fullName>
        <shortName evidence="1">CPR</shortName>
        <shortName evidence="1">P450R</shortName>
        <ecNumber evidence="1">1.6.2.4</ecNumber>
    </recommendedName>
</protein>
<accession>P37201</accession>
<keyword id="KW-1003">Cell membrane</keyword>
<keyword id="KW-0256">Endoplasmic reticulum</keyword>
<keyword id="KW-0274">FAD</keyword>
<keyword id="KW-0285">Flavoprotein</keyword>
<keyword id="KW-0288">FMN</keyword>
<keyword id="KW-0444">Lipid biosynthesis</keyword>
<keyword id="KW-0443">Lipid metabolism</keyword>
<keyword id="KW-0472">Membrane</keyword>
<keyword id="KW-0496">Mitochondrion</keyword>
<keyword id="KW-1000">Mitochondrion outer membrane</keyword>
<keyword id="KW-0521">NADP</keyword>
<keyword id="KW-0560">Oxidoreductase</keyword>
<keyword id="KW-0752">Steroid biosynthesis</keyword>
<keyword id="KW-0753">Steroid metabolism</keyword>
<keyword id="KW-0756">Sterol biosynthesis</keyword>
<keyword id="KW-1207">Sterol metabolism</keyword>
<keyword id="KW-0812">Transmembrane</keyword>
<keyword id="KW-1133">Transmembrane helix</keyword>
<feature type="chain" id="PRO_0000167606" description="NADPH--cytochrome P450 reductase">
    <location>
        <begin position="1"/>
        <end position="680"/>
    </location>
</feature>
<feature type="topological domain" description="Lumenal" evidence="1">
    <location>
        <begin position="1"/>
        <end position="5"/>
    </location>
</feature>
<feature type="transmembrane region" description="Helical" evidence="1">
    <location>
        <begin position="6"/>
        <end position="23"/>
    </location>
</feature>
<feature type="topological domain" description="Cytoplasmic" evidence="1">
    <location>
        <begin position="24"/>
        <end position="680"/>
    </location>
</feature>
<feature type="domain" description="Flavodoxin-like" evidence="1">
    <location>
        <begin position="60"/>
        <end position="204"/>
    </location>
</feature>
<feature type="domain" description="FAD-binding FR-type" evidence="1">
    <location>
        <begin position="264"/>
        <end position="509"/>
    </location>
</feature>
<feature type="binding site" evidence="1">
    <location>
        <begin position="66"/>
        <end position="71"/>
    </location>
    <ligand>
        <name>FMN</name>
        <dbReference type="ChEBI" id="CHEBI:58210"/>
    </ligand>
</feature>
<feature type="binding site" evidence="1">
    <location>
        <begin position="117"/>
        <end position="120"/>
    </location>
    <ligand>
        <name>FMN</name>
        <dbReference type="ChEBI" id="CHEBI:58210"/>
    </ligand>
</feature>
<feature type="binding site" evidence="1">
    <location>
        <begin position="152"/>
        <end position="161"/>
    </location>
    <ligand>
        <name>FMN</name>
        <dbReference type="ChEBI" id="CHEBI:58210"/>
    </ligand>
</feature>
<feature type="binding site" evidence="1">
    <location>
        <position position="187"/>
    </location>
    <ligand>
        <name>FMN</name>
        <dbReference type="ChEBI" id="CHEBI:58210"/>
    </ligand>
</feature>
<feature type="binding site" evidence="1">
    <location>
        <position position="283"/>
    </location>
    <ligand>
        <name>NADP(+)</name>
        <dbReference type="ChEBI" id="CHEBI:58349"/>
    </ligand>
</feature>
<feature type="binding site" evidence="1">
    <location>
        <begin position="439"/>
        <end position="442"/>
    </location>
    <ligand>
        <name>FAD</name>
        <dbReference type="ChEBI" id="CHEBI:57692"/>
    </ligand>
</feature>
<feature type="binding site" evidence="1">
    <location>
        <begin position="457"/>
        <end position="459"/>
    </location>
    <ligand>
        <name>FAD</name>
        <dbReference type="ChEBI" id="CHEBI:57692"/>
    </ligand>
</feature>
<feature type="binding site" evidence="1">
    <location>
        <begin position="473"/>
        <end position="476"/>
    </location>
    <ligand>
        <name>FAD</name>
        <dbReference type="ChEBI" id="CHEBI:57692"/>
    </ligand>
</feature>
<feature type="binding site" evidence="1">
    <location>
        <position position="537"/>
    </location>
    <ligand>
        <name>NADP(+)</name>
        <dbReference type="ChEBI" id="CHEBI:58349"/>
    </ligand>
</feature>
<feature type="binding site" evidence="1">
    <location>
        <begin position="599"/>
        <end position="600"/>
    </location>
    <ligand>
        <name>NADP(+)</name>
        <dbReference type="ChEBI" id="CHEBI:58349"/>
    </ligand>
</feature>
<feature type="binding site" evidence="1">
    <location>
        <begin position="606"/>
        <end position="610"/>
    </location>
    <ligand>
        <name>NADP(+)</name>
        <dbReference type="ChEBI" id="CHEBI:58349"/>
    </ligand>
</feature>
<feature type="binding site" evidence="1">
    <location>
        <position position="642"/>
    </location>
    <ligand>
        <name>NADP(+)</name>
        <dbReference type="ChEBI" id="CHEBI:58349"/>
    </ligand>
</feature>
<feature type="binding site" evidence="1">
    <location>
        <position position="680"/>
    </location>
    <ligand>
        <name>FAD</name>
        <dbReference type="ChEBI" id="CHEBI:57692"/>
    </ligand>
</feature>
<evidence type="ECO:0000255" key="1">
    <source>
        <dbReference type="HAMAP-Rule" id="MF_03212"/>
    </source>
</evidence>
<reference key="1">
    <citation type="journal article" date="1990" name="J. Biol. Chem.">
        <title>Isolation and characterization of the alkane-inducible NADPH-cytochrome P-450 oxidoreductase gene from Candida tropicalis. Identification of invariant residues within similar amino acid sequences of divergent flavoproteins.</title>
        <authorList>
            <person name="Sutter T.R."/>
            <person name="Sanglard D."/>
            <person name="Loper J.C."/>
        </authorList>
    </citation>
    <scope>NUCLEOTIDE SEQUENCE [GENOMIC DNA]</scope>
    <source>
        <strain>ATCC 750 / CBS 94 / DSM 11953 / JCM 1541 / NBRC 1400</strain>
    </source>
</reference>
<reference key="2">
    <citation type="journal article" date="1990" name="J. Biol. Chem.">
        <authorList>
            <person name="Sutter T.R."/>
            <person name="Sanglard D."/>
            <person name="Loper J.C."/>
        </authorList>
    </citation>
    <scope>ERRATUM OF PUBMED:2118906</scope>
</reference>
<organism>
    <name type="scientific">Candida tropicalis</name>
    <name type="common">Yeast</name>
    <dbReference type="NCBI Taxonomy" id="5482"/>
    <lineage>
        <taxon>Eukaryota</taxon>
        <taxon>Fungi</taxon>
        <taxon>Dikarya</taxon>
        <taxon>Ascomycota</taxon>
        <taxon>Saccharomycotina</taxon>
        <taxon>Pichiomycetes</taxon>
        <taxon>Debaryomycetaceae</taxon>
        <taxon>Candida/Lodderomyces clade</taxon>
        <taxon>Candida</taxon>
    </lineage>
</organism>
<comment type="function">
    <text evidence="1">This enzyme is required for electron transfer from NADP to cytochrome P450 in microsomes. It can also provide electron transfer to heme oxygenase and cytochrome B5. Involved in ergosterol biosynthesis.</text>
</comment>
<comment type="catalytic activity">
    <reaction evidence="1">
        <text>2 oxidized [cytochrome P450] + NADPH = 2 reduced [cytochrome P450] + NADP(+) + H(+)</text>
        <dbReference type="Rhea" id="RHEA:24040"/>
        <dbReference type="Rhea" id="RHEA-COMP:14627"/>
        <dbReference type="Rhea" id="RHEA-COMP:14628"/>
        <dbReference type="ChEBI" id="CHEBI:15378"/>
        <dbReference type="ChEBI" id="CHEBI:55376"/>
        <dbReference type="ChEBI" id="CHEBI:57783"/>
        <dbReference type="ChEBI" id="CHEBI:58349"/>
        <dbReference type="ChEBI" id="CHEBI:60344"/>
        <dbReference type="EC" id="1.6.2.4"/>
    </reaction>
</comment>
<comment type="cofactor">
    <cofactor evidence="1">
        <name>FAD</name>
        <dbReference type="ChEBI" id="CHEBI:57692"/>
    </cofactor>
    <text evidence="1">Binds 1 FAD per monomer.</text>
</comment>
<comment type="cofactor">
    <cofactor evidence="1">
        <name>FMN</name>
        <dbReference type="ChEBI" id="CHEBI:58210"/>
    </cofactor>
    <text evidence="1">Binds 1 FMN per monomer.</text>
</comment>
<comment type="subcellular location">
    <subcellularLocation>
        <location evidence="1">Endoplasmic reticulum membrane</location>
        <topology evidence="1">Single-pass membrane protein</topology>
        <orientation evidence="1">Cytoplasmic side</orientation>
    </subcellularLocation>
    <subcellularLocation>
        <location evidence="1">Mitochondrion outer membrane</location>
        <topology evidence="1">Single-pass membrane protein</topology>
        <orientation evidence="1">Cytoplasmic side</orientation>
    </subcellularLocation>
    <subcellularLocation>
        <location evidence="1">Cell membrane</location>
        <topology evidence="1">Single-pass membrane protein</topology>
        <orientation evidence="1">Cytoplasmic side</orientation>
    </subcellularLocation>
</comment>
<comment type="similarity">
    <text evidence="1">Belongs to the NADPH--cytochrome P450 reductase family.</text>
</comment>
<comment type="similarity">
    <text evidence="1">In the N-terminal section; belongs to the flavodoxin family.</text>
</comment>
<comment type="similarity">
    <text evidence="1">In the C-terminal section; belongs to the flavoprotein pyridine nucleotide cytochrome reductase family.</text>
</comment>
<dbReference type="EC" id="1.6.2.4" evidence="1"/>
<dbReference type="EMBL" id="M35199">
    <property type="protein sequence ID" value="AAA34333.1"/>
    <property type="molecule type" value="Genomic_DNA"/>
</dbReference>
<dbReference type="PIR" id="A37890">
    <property type="entry name" value="A37890"/>
</dbReference>
<dbReference type="SMR" id="P37201"/>
<dbReference type="VEuPathDB" id="FungiDB:CTMYA2_036990"/>
<dbReference type="VEuPathDB" id="FungiDB:CTRG_00485"/>
<dbReference type="SABIO-RK" id="P37201"/>
<dbReference type="GO" id="GO:0005829">
    <property type="term" value="C:cytosol"/>
    <property type="evidence" value="ECO:0007669"/>
    <property type="project" value="TreeGrafter"/>
</dbReference>
<dbReference type="GO" id="GO:0005789">
    <property type="term" value="C:endoplasmic reticulum membrane"/>
    <property type="evidence" value="ECO:0007669"/>
    <property type="project" value="UniProtKB-SubCell"/>
</dbReference>
<dbReference type="GO" id="GO:0005741">
    <property type="term" value="C:mitochondrial outer membrane"/>
    <property type="evidence" value="ECO:0007669"/>
    <property type="project" value="UniProtKB-SubCell"/>
</dbReference>
<dbReference type="GO" id="GO:0005886">
    <property type="term" value="C:plasma membrane"/>
    <property type="evidence" value="ECO:0007669"/>
    <property type="project" value="UniProtKB-SubCell"/>
</dbReference>
<dbReference type="GO" id="GO:0009055">
    <property type="term" value="F:electron transfer activity"/>
    <property type="evidence" value="ECO:0007669"/>
    <property type="project" value="EnsemblFungi"/>
</dbReference>
<dbReference type="GO" id="GO:0050660">
    <property type="term" value="F:flavin adenine dinucleotide binding"/>
    <property type="evidence" value="ECO:0007669"/>
    <property type="project" value="UniProtKB-UniRule"/>
</dbReference>
<dbReference type="GO" id="GO:0010181">
    <property type="term" value="F:FMN binding"/>
    <property type="evidence" value="ECO:0007669"/>
    <property type="project" value="UniProtKB-UniRule"/>
</dbReference>
<dbReference type="GO" id="GO:0050661">
    <property type="term" value="F:NADP binding"/>
    <property type="evidence" value="ECO:0007669"/>
    <property type="project" value="UniProtKB-UniRule"/>
</dbReference>
<dbReference type="GO" id="GO:0003959">
    <property type="term" value="F:NADPH dehydrogenase activity"/>
    <property type="evidence" value="ECO:0007669"/>
    <property type="project" value="EnsemblFungi"/>
</dbReference>
<dbReference type="GO" id="GO:0003958">
    <property type="term" value="F:NADPH-hemoprotein reductase activity"/>
    <property type="evidence" value="ECO:0007669"/>
    <property type="project" value="UniProtKB-UniRule"/>
</dbReference>
<dbReference type="GO" id="GO:0006696">
    <property type="term" value="P:ergosterol biosynthetic process"/>
    <property type="evidence" value="ECO:0007669"/>
    <property type="project" value="UniProtKB-UniRule"/>
</dbReference>
<dbReference type="CDD" id="cd06204">
    <property type="entry name" value="CYPOR"/>
    <property type="match status" value="1"/>
</dbReference>
<dbReference type="FunFam" id="1.20.990.10:FF:000009">
    <property type="entry name" value="NADPH--cytochrome P450 reductase"/>
    <property type="match status" value="1"/>
</dbReference>
<dbReference type="FunFam" id="2.40.30.10:FF:000100">
    <property type="entry name" value="NADPH--cytochrome P450 reductase"/>
    <property type="match status" value="1"/>
</dbReference>
<dbReference type="FunFam" id="3.40.50.360:FF:000075">
    <property type="entry name" value="NADPH--cytochrome P450 reductase"/>
    <property type="match status" value="1"/>
</dbReference>
<dbReference type="FunFam" id="3.40.50.80:FF:000018">
    <property type="entry name" value="NADPH--cytochrome P450 reductase"/>
    <property type="match status" value="1"/>
</dbReference>
<dbReference type="Gene3D" id="3.40.50.360">
    <property type="match status" value="1"/>
</dbReference>
<dbReference type="Gene3D" id="1.20.990.10">
    <property type="entry name" value="NADPH-cytochrome p450 Reductase, Chain A, domain 3"/>
    <property type="match status" value="1"/>
</dbReference>
<dbReference type="Gene3D" id="3.40.50.80">
    <property type="entry name" value="Nucleotide-binding domain of ferredoxin-NADP reductase (FNR) module"/>
    <property type="match status" value="1"/>
</dbReference>
<dbReference type="Gene3D" id="2.40.30.10">
    <property type="entry name" value="Translation factors"/>
    <property type="match status" value="1"/>
</dbReference>
<dbReference type="HAMAP" id="MF_03212">
    <property type="entry name" value="NCPR"/>
    <property type="match status" value="1"/>
</dbReference>
<dbReference type="InterPro" id="IPR003097">
    <property type="entry name" value="CysJ-like_FAD-binding"/>
</dbReference>
<dbReference type="InterPro" id="IPR017927">
    <property type="entry name" value="FAD-bd_FR_type"/>
</dbReference>
<dbReference type="InterPro" id="IPR001094">
    <property type="entry name" value="Flavdoxin-like"/>
</dbReference>
<dbReference type="InterPro" id="IPR008254">
    <property type="entry name" value="Flavodoxin/NO_synth"/>
</dbReference>
<dbReference type="InterPro" id="IPR001709">
    <property type="entry name" value="Flavoprot_Pyr_Nucl_cyt_Rdtase"/>
</dbReference>
<dbReference type="InterPro" id="IPR029039">
    <property type="entry name" value="Flavoprotein-like_sf"/>
</dbReference>
<dbReference type="InterPro" id="IPR039261">
    <property type="entry name" value="FNR_nucleotide-bd"/>
</dbReference>
<dbReference type="InterPro" id="IPR023173">
    <property type="entry name" value="NADPH_Cyt_P450_Rdtase_alpha"/>
</dbReference>
<dbReference type="InterPro" id="IPR001433">
    <property type="entry name" value="OxRdtase_FAD/NAD-bd"/>
</dbReference>
<dbReference type="InterPro" id="IPR023208">
    <property type="entry name" value="P450R"/>
</dbReference>
<dbReference type="InterPro" id="IPR017938">
    <property type="entry name" value="Riboflavin_synthase-like_b-brl"/>
</dbReference>
<dbReference type="PANTHER" id="PTHR19384:SF17">
    <property type="entry name" value="NADPH--CYTOCHROME P450 REDUCTASE"/>
    <property type="match status" value="1"/>
</dbReference>
<dbReference type="PANTHER" id="PTHR19384">
    <property type="entry name" value="NITRIC OXIDE SYNTHASE-RELATED"/>
    <property type="match status" value="1"/>
</dbReference>
<dbReference type="Pfam" id="PF00667">
    <property type="entry name" value="FAD_binding_1"/>
    <property type="match status" value="1"/>
</dbReference>
<dbReference type="Pfam" id="PF00258">
    <property type="entry name" value="Flavodoxin_1"/>
    <property type="match status" value="1"/>
</dbReference>
<dbReference type="Pfam" id="PF00175">
    <property type="entry name" value="NAD_binding_1"/>
    <property type="match status" value="1"/>
</dbReference>
<dbReference type="PIRSF" id="PIRSF000208">
    <property type="entry name" value="P450R"/>
    <property type="match status" value="1"/>
</dbReference>
<dbReference type="PRINTS" id="PR00369">
    <property type="entry name" value="FLAVODOXIN"/>
</dbReference>
<dbReference type="PRINTS" id="PR00371">
    <property type="entry name" value="FPNCR"/>
</dbReference>
<dbReference type="SUPFAM" id="SSF52343">
    <property type="entry name" value="Ferredoxin reductase-like, C-terminal NADP-linked domain"/>
    <property type="match status" value="1"/>
</dbReference>
<dbReference type="SUPFAM" id="SSF52218">
    <property type="entry name" value="Flavoproteins"/>
    <property type="match status" value="1"/>
</dbReference>
<dbReference type="SUPFAM" id="SSF63380">
    <property type="entry name" value="Riboflavin synthase domain-like"/>
    <property type="match status" value="1"/>
</dbReference>
<dbReference type="PROSITE" id="PS51384">
    <property type="entry name" value="FAD_FR"/>
    <property type="match status" value="1"/>
</dbReference>
<dbReference type="PROSITE" id="PS50902">
    <property type="entry name" value="FLAVODOXIN_LIKE"/>
    <property type="match status" value="1"/>
</dbReference>
<proteinExistence type="inferred from homology"/>
<sequence length="680" mass="76689">MALDKLDLYVIITLVVAIAAYFAKNQFLDQQQDTGFLNTDSGDGNSRDILQALKKNNKNTLLLFGSQTGTAEDYANKLSRELHSRFGLKTMVADFADYDFENFGDITEDILVFFIVATYGEGEPTDNADEFHTWLTEEADTLSTLKYTVFGLGNSTYEFFNAIGRKFDRLLGEKGGDRFAEYGEGDDGTGTLDEDFLAWKDNVFDSLKNDLNFEEKELKYEPNVKLTERDDLSGNDPDVSLGEPNVKYIKSEGVDLTKGPFDHTHPFLARIVKTKELFTSEDRHCVHVEFDISESNLKYTTGDHLAIWPSNSDENIKQFAKCFGLEDKLDTVIELKALDSTYSIPFPNPITYGAVIRHHLEISGPVSRQFFLSIAGFAPDEETKKSFTRIGGDKQEFASKVTRRKFNIADALLFASNNRPWSDVPFEFLIENVQHLTPRYYSISSSSLSEKQTINVTAVVEAEEEADGRPVTGVVTNLLKNIEIEQNKTGETPMVHYDLNGPRGKFSKFRLPVHVRRSNFKLPKNSTTPVILIGPGTGVAPLRGFVRERVQQVKNGVNVGKTVLFYGCRNSEQDFLYKQEWSEYASVLGENFEMFNAFSRQDPTKKVYVQDKILENSALVDELLSSGAIIYVCGDASRMARDVQAAIAKIVAKSRDIHEDKAAELVKSWKVQNRYQEDVW</sequence>
<name>NCPR_CANTR</name>